<protein>
    <recommendedName>
        <fullName evidence="1">Chorismate synthase</fullName>
        <shortName evidence="1">CS</shortName>
        <ecNumber evidence="1">4.2.3.5</ecNumber>
    </recommendedName>
    <alternativeName>
        <fullName evidence="1">5-enolpyruvylshikimate-3-phosphate phospholyase</fullName>
    </alternativeName>
</protein>
<organism>
    <name type="scientific">Ralstonia pickettii (strain 12J)</name>
    <dbReference type="NCBI Taxonomy" id="402626"/>
    <lineage>
        <taxon>Bacteria</taxon>
        <taxon>Pseudomonadati</taxon>
        <taxon>Pseudomonadota</taxon>
        <taxon>Betaproteobacteria</taxon>
        <taxon>Burkholderiales</taxon>
        <taxon>Burkholderiaceae</taxon>
        <taxon>Ralstonia</taxon>
    </lineage>
</organism>
<keyword id="KW-0028">Amino-acid biosynthesis</keyword>
<keyword id="KW-0057">Aromatic amino acid biosynthesis</keyword>
<keyword id="KW-0274">FAD</keyword>
<keyword id="KW-0285">Flavoprotein</keyword>
<keyword id="KW-0288">FMN</keyword>
<keyword id="KW-0456">Lyase</keyword>
<keyword id="KW-0521">NADP</keyword>
<dbReference type="EC" id="4.2.3.5" evidence="1"/>
<dbReference type="EMBL" id="CP001068">
    <property type="protein sequence ID" value="ACD27122.1"/>
    <property type="molecule type" value="Genomic_DNA"/>
</dbReference>
<dbReference type="SMR" id="B2UGK8"/>
<dbReference type="STRING" id="402626.Rpic_1987"/>
<dbReference type="KEGG" id="rpi:Rpic_1987"/>
<dbReference type="eggNOG" id="COG0082">
    <property type="taxonomic scope" value="Bacteria"/>
</dbReference>
<dbReference type="HOGENOM" id="CLU_034547_0_2_4"/>
<dbReference type="UniPathway" id="UPA00053">
    <property type="reaction ID" value="UER00090"/>
</dbReference>
<dbReference type="GO" id="GO:0005829">
    <property type="term" value="C:cytosol"/>
    <property type="evidence" value="ECO:0007669"/>
    <property type="project" value="TreeGrafter"/>
</dbReference>
<dbReference type="GO" id="GO:0004107">
    <property type="term" value="F:chorismate synthase activity"/>
    <property type="evidence" value="ECO:0007669"/>
    <property type="project" value="UniProtKB-UniRule"/>
</dbReference>
<dbReference type="GO" id="GO:0010181">
    <property type="term" value="F:FMN binding"/>
    <property type="evidence" value="ECO:0007669"/>
    <property type="project" value="TreeGrafter"/>
</dbReference>
<dbReference type="GO" id="GO:0008652">
    <property type="term" value="P:amino acid biosynthetic process"/>
    <property type="evidence" value="ECO:0007669"/>
    <property type="project" value="UniProtKB-KW"/>
</dbReference>
<dbReference type="GO" id="GO:0009073">
    <property type="term" value="P:aromatic amino acid family biosynthetic process"/>
    <property type="evidence" value="ECO:0007669"/>
    <property type="project" value="UniProtKB-KW"/>
</dbReference>
<dbReference type="GO" id="GO:0009423">
    <property type="term" value="P:chorismate biosynthetic process"/>
    <property type="evidence" value="ECO:0007669"/>
    <property type="project" value="UniProtKB-UniRule"/>
</dbReference>
<dbReference type="CDD" id="cd07304">
    <property type="entry name" value="Chorismate_synthase"/>
    <property type="match status" value="1"/>
</dbReference>
<dbReference type="FunFam" id="3.60.150.10:FF:000001">
    <property type="entry name" value="Chorismate synthase"/>
    <property type="match status" value="1"/>
</dbReference>
<dbReference type="Gene3D" id="3.60.150.10">
    <property type="entry name" value="Chorismate synthase AroC"/>
    <property type="match status" value="1"/>
</dbReference>
<dbReference type="HAMAP" id="MF_00300">
    <property type="entry name" value="Chorismate_synth"/>
    <property type="match status" value="1"/>
</dbReference>
<dbReference type="InterPro" id="IPR000453">
    <property type="entry name" value="Chorismate_synth"/>
</dbReference>
<dbReference type="InterPro" id="IPR035904">
    <property type="entry name" value="Chorismate_synth_AroC_sf"/>
</dbReference>
<dbReference type="InterPro" id="IPR020541">
    <property type="entry name" value="Chorismate_synthase_CS"/>
</dbReference>
<dbReference type="NCBIfam" id="TIGR00033">
    <property type="entry name" value="aroC"/>
    <property type="match status" value="1"/>
</dbReference>
<dbReference type="NCBIfam" id="NF003793">
    <property type="entry name" value="PRK05382.1"/>
    <property type="match status" value="1"/>
</dbReference>
<dbReference type="PANTHER" id="PTHR21085">
    <property type="entry name" value="CHORISMATE SYNTHASE"/>
    <property type="match status" value="1"/>
</dbReference>
<dbReference type="PANTHER" id="PTHR21085:SF0">
    <property type="entry name" value="CHORISMATE SYNTHASE"/>
    <property type="match status" value="1"/>
</dbReference>
<dbReference type="Pfam" id="PF01264">
    <property type="entry name" value="Chorismate_synt"/>
    <property type="match status" value="1"/>
</dbReference>
<dbReference type="PIRSF" id="PIRSF001456">
    <property type="entry name" value="Chorismate_synth"/>
    <property type="match status" value="1"/>
</dbReference>
<dbReference type="SUPFAM" id="SSF103263">
    <property type="entry name" value="Chorismate synthase, AroC"/>
    <property type="match status" value="1"/>
</dbReference>
<dbReference type="PROSITE" id="PS00787">
    <property type="entry name" value="CHORISMATE_SYNTHASE_1"/>
    <property type="match status" value="1"/>
</dbReference>
<dbReference type="PROSITE" id="PS00788">
    <property type="entry name" value="CHORISMATE_SYNTHASE_2"/>
    <property type="match status" value="1"/>
</dbReference>
<dbReference type="PROSITE" id="PS00789">
    <property type="entry name" value="CHORISMATE_SYNTHASE_3"/>
    <property type="match status" value="1"/>
</dbReference>
<proteinExistence type="inferred from homology"/>
<gene>
    <name evidence="1" type="primary">aroC</name>
    <name type="ordered locus">Rpic_1987</name>
</gene>
<feature type="chain" id="PRO_1000115386" description="Chorismate synthase">
    <location>
        <begin position="1"/>
        <end position="366"/>
    </location>
</feature>
<feature type="binding site" evidence="1">
    <location>
        <position position="48"/>
    </location>
    <ligand>
        <name>NADP(+)</name>
        <dbReference type="ChEBI" id="CHEBI:58349"/>
    </ligand>
</feature>
<feature type="binding site" evidence="1">
    <location>
        <position position="54"/>
    </location>
    <ligand>
        <name>NADP(+)</name>
        <dbReference type="ChEBI" id="CHEBI:58349"/>
    </ligand>
</feature>
<feature type="binding site" evidence="1">
    <location>
        <begin position="125"/>
        <end position="127"/>
    </location>
    <ligand>
        <name>FMN</name>
        <dbReference type="ChEBI" id="CHEBI:58210"/>
    </ligand>
</feature>
<feature type="binding site" evidence="1">
    <location>
        <begin position="238"/>
        <end position="239"/>
    </location>
    <ligand>
        <name>FMN</name>
        <dbReference type="ChEBI" id="CHEBI:58210"/>
    </ligand>
</feature>
<feature type="binding site" evidence="1">
    <location>
        <position position="278"/>
    </location>
    <ligand>
        <name>FMN</name>
        <dbReference type="ChEBI" id="CHEBI:58210"/>
    </ligand>
</feature>
<feature type="binding site" evidence="1">
    <location>
        <begin position="293"/>
        <end position="297"/>
    </location>
    <ligand>
        <name>FMN</name>
        <dbReference type="ChEBI" id="CHEBI:58210"/>
    </ligand>
</feature>
<feature type="binding site" evidence="1">
    <location>
        <position position="319"/>
    </location>
    <ligand>
        <name>FMN</name>
        <dbReference type="ChEBI" id="CHEBI:58210"/>
    </ligand>
</feature>
<reference key="1">
    <citation type="submission" date="2008-05" db="EMBL/GenBank/DDBJ databases">
        <title>Complete sequence of chromosome 1 of Ralstonia pickettii 12J.</title>
        <authorList>
            <person name="Lucas S."/>
            <person name="Copeland A."/>
            <person name="Lapidus A."/>
            <person name="Glavina del Rio T."/>
            <person name="Dalin E."/>
            <person name="Tice H."/>
            <person name="Bruce D."/>
            <person name="Goodwin L."/>
            <person name="Pitluck S."/>
            <person name="Meincke L."/>
            <person name="Brettin T."/>
            <person name="Detter J.C."/>
            <person name="Han C."/>
            <person name="Kuske C.R."/>
            <person name="Schmutz J."/>
            <person name="Larimer F."/>
            <person name="Land M."/>
            <person name="Hauser L."/>
            <person name="Kyrpides N."/>
            <person name="Mikhailova N."/>
            <person name="Marsh T."/>
            <person name="Richardson P."/>
        </authorList>
    </citation>
    <scope>NUCLEOTIDE SEQUENCE [LARGE SCALE GENOMIC DNA]</scope>
    <source>
        <strain>12J</strain>
    </source>
</reference>
<evidence type="ECO:0000255" key="1">
    <source>
        <dbReference type="HAMAP-Rule" id="MF_00300"/>
    </source>
</evidence>
<accession>B2UGK8</accession>
<comment type="function">
    <text evidence="1">Catalyzes the anti-1,4-elimination of the C-3 phosphate and the C-6 proR hydrogen from 5-enolpyruvylshikimate-3-phosphate (EPSP) to yield chorismate, which is the branch point compound that serves as the starting substrate for the three terminal pathways of aromatic amino acid biosynthesis. This reaction introduces a second double bond into the aromatic ring system.</text>
</comment>
<comment type="catalytic activity">
    <reaction evidence="1">
        <text>5-O-(1-carboxyvinyl)-3-phosphoshikimate = chorismate + phosphate</text>
        <dbReference type="Rhea" id="RHEA:21020"/>
        <dbReference type="ChEBI" id="CHEBI:29748"/>
        <dbReference type="ChEBI" id="CHEBI:43474"/>
        <dbReference type="ChEBI" id="CHEBI:57701"/>
        <dbReference type="EC" id="4.2.3.5"/>
    </reaction>
</comment>
<comment type="cofactor">
    <cofactor evidence="1">
        <name>FMNH2</name>
        <dbReference type="ChEBI" id="CHEBI:57618"/>
    </cofactor>
    <text evidence="1">Reduced FMN (FMNH(2)).</text>
</comment>
<comment type="pathway">
    <text evidence="1">Metabolic intermediate biosynthesis; chorismate biosynthesis; chorismate from D-erythrose 4-phosphate and phosphoenolpyruvate: step 7/7.</text>
</comment>
<comment type="subunit">
    <text evidence="1">Homotetramer.</text>
</comment>
<comment type="similarity">
    <text evidence="1">Belongs to the chorismate synthase family.</text>
</comment>
<name>AROC_RALPJ</name>
<sequence length="366" mass="39089">MSGNTLGLLFSVTTFGESHGPAIGAVIDGCPPGMTLSAEDIQPDLDRRKPGTSRHVTQRKEEDLVEILSGVYEGKTTGTPICLLIRNTDQRSKDYSNIAETFRPGHADYTYWHKYGIRDPRGGGRSSARLTAPTVAAGAVAKKWLREKFGIEIHGFMSQLGDIHIPFMDWNEVPNNPFFAPNAEIVPELETYMDALRKDGDSVGARIEVVATGVPVGWGEPLFDRLDADIAHAMMGLNAVKGVEIGAGFHAVSQRGSEHGDELTPEGFVGNNAGGILGGISTGQDISVSLAIKPTSSIRTPRRSIDKAGDPAVVETFGRHDPCVGIRATPIAEALLALVLIDHALRHRAQCGDVSVETPAIPAKAS</sequence>